<name>RPOZ_COLP3</name>
<gene>
    <name evidence="1" type="primary">rpoZ</name>
    <name type="ordered locus">CPS_4972</name>
</gene>
<evidence type="ECO:0000255" key="1">
    <source>
        <dbReference type="HAMAP-Rule" id="MF_00366"/>
    </source>
</evidence>
<keyword id="KW-0240">DNA-directed RNA polymerase</keyword>
<keyword id="KW-0548">Nucleotidyltransferase</keyword>
<keyword id="KW-0804">Transcription</keyword>
<keyword id="KW-0808">Transferase</keyword>
<accession>Q47UB2</accession>
<dbReference type="EC" id="2.7.7.6" evidence="1"/>
<dbReference type="EMBL" id="CP000083">
    <property type="protein sequence ID" value="AAZ25963.1"/>
    <property type="molecule type" value="Genomic_DNA"/>
</dbReference>
<dbReference type="RefSeq" id="WP_011045691.1">
    <property type="nucleotide sequence ID" value="NC_003910.7"/>
</dbReference>
<dbReference type="SMR" id="Q47UB2"/>
<dbReference type="STRING" id="167879.CPS_4972"/>
<dbReference type="KEGG" id="cps:CPS_4972"/>
<dbReference type="eggNOG" id="COG1758">
    <property type="taxonomic scope" value="Bacteria"/>
</dbReference>
<dbReference type="HOGENOM" id="CLU_125406_5_2_6"/>
<dbReference type="Proteomes" id="UP000000547">
    <property type="component" value="Chromosome"/>
</dbReference>
<dbReference type="GO" id="GO:0000428">
    <property type="term" value="C:DNA-directed RNA polymerase complex"/>
    <property type="evidence" value="ECO:0007669"/>
    <property type="project" value="UniProtKB-KW"/>
</dbReference>
<dbReference type="GO" id="GO:0003677">
    <property type="term" value="F:DNA binding"/>
    <property type="evidence" value="ECO:0007669"/>
    <property type="project" value="UniProtKB-UniRule"/>
</dbReference>
<dbReference type="GO" id="GO:0003899">
    <property type="term" value="F:DNA-directed RNA polymerase activity"/>
    <property type="evidence" value="ECO:0007669"/>
    <property type="project" value="UniProtKB-UniRule"/>
</dbReference>
<dbReference type="GO" id="GO:0006351">
    <property type="term" value="P:DNA-templated transcription"/>
    <property type="evidence" value="ECO:0007669"/>
    <property type="project" value="UniProtKB-UniRule"/>
</dbReference>
<dbReference type="Gene3D" id="3.90.940.10">
    <property type="match status" value="1"/>
</dbReference>
<dbReference type="HAMAP" id="MF_00366">
    <property type="entry name" value="RNApol_bact_RpoZ"/>
    <property type="match status" value="1"/>
</dbReference>
<dbReference type="InterPro" id="IPR003716">
    <property type="entry name" value="DNA-dir_RNA_pol_omega"/>
</dbReference>
<dbReference type="InterPro" id="IPR006110">
    <property type="entry name" value="Pol_omega/Rpo6/RPB6"/>
</dbReference>
<dbReference type="InterPro" id="IPR036161">
    <property type="entry name" value="RPB6/omega-like_sf"/>
</dbReference>
<dbReference type="NCBIfam" id="TIGR00690">
    <property type="entry name" value="rpoZ"/>
    <property type="match status" value="1"/>
</dbReference>
<dbReference type="PANTHER" id="PTHR34476">
    <property type="entry name" value="DNA-DIRECTED RNA POLYMERASE SUBUNIT OMEGA"/>
    <property type="match status" value="1"/>
</dbReference>
<dbReference type="PANTHER" id="PTHR34476:SF1">
    <property type="entry name" value="DNA-DIRECTED RNA POLYMERASE SUBUNIT OMEGA"/>
    <property type="match status" value="1"/>
</dbReference>
<dbReference type="Pfam" id="PF01192">
    <property type="entry name" value="RNA_pol_Rpb6"/>
    <property type="match status" value="1"/>
</dbReference>
<dbReference type="SMART" id="SM01409">
    <property type="entry name" value="RNA_pol_Rpb6"/>
    <property type="match status" value="1"/>
</dbReference>
<dbReference type="SUPFAM" id="SSF63562">
    <property type="entry name" value="RPB6/omega subunit-like"/>
    <property type="match status" value="1"/>
</dbReference>
<protein>
    <recommendedName>
        <fullName evidence="1">DNA-directed RNA polymerase subunit omega</fullName>
        <shortName evidence="1">RNAP omega subunit</shortName>
        <ecNumber evidence="1">2.7.7.6</ecNumber>
    </recommendedName>
    <alternativeName>
        <fullName evidence="1">RNA polymerase omega subunit</fullName>
    </alternativeName>
    <alternativeName>
        <fullName evidence="1">Transcriptase subunit omega</fullName>
    </alternativeName>
</protein>
<feature type="chain" id="PRO_0000237449" description="DNA-directed RNA polymerase subunit omega">
    <location>
        <begin position="1"/>
        <end position="95"/>
    </location>
</feature>
<proteinExistence type="inferred from homology"/>
<comment type="function">
    <text evidence="1">Promotes RNA polymerase assembly. Latches the N- and C-terminal regions of the beta' subunit thereby facilitating its interaction with the beta and alpha subunits.</text>
</comment>
<comment type="catalytic activity">
    <reaction evidence="1">
        <text>RNA(n) + a ribonucleoside 5'-triphosphate = RNA(n+1) + diphosphate</text>
        <dbReference type="Rhea" id="RHEA:21248"/>
        <dbReference type="Rhea" id="RHEA-COMP:14527"/>
        <dbReference type="Rhea" id="RHEA-COMP:17342"/>
        <dbReference type="ChEBI" id="CHEBI:33019"/>
        <dbReference type="ChEBI" id="CHEBI:61557"/>
        <dbReference type="ChEBI" id="CHEBI:140395"/>
        <dbReference type="EC" id="2.7.7.6"/>
    </reaction>
</comment>
<comment type="subunit">
    <text evidence="1">The RNAP catalytic core consists of 2 alpha, 1 beta, 1 beta' and 1 omega subunit. When a sigma factor is associated with the core the holoenzyme is formed, which can initiate transcription.</text>
</comment>
<comment type="similarity">
    <text evidence="1">Belongs to the RNA polymerase subunit omega family.</text>
</comment>
<sequence length="95" mass="10232">MARVTVEDAVDKVGNRFDLVLVASRRARQIATGGKDPLVDVENDKPTVIALREIEAGLITTDIMNTSDRAQQIQQDTAELDAVAAIVGGQQEELS</sequence>
<reference key="1">
    <citation type="journal article" date="2005" name="Proc. Natl. Acad. Sci. U.S.A.">
        <title>The psychrophilic lifestyle as revealed by the genome sequence of Colwellia psychrerythraea 34H through genomic and proteomic analyses.</title>
        <authorList>
            <person name="Methe B.A."/>
            <person name="Nelson K.E."/>
            <person name="Deming J.W."/>
            <person name="Momen B."/>
            <person name="Melamud E."/>
            <person name="Zhang X."/>
            <person name="Moult J."/>
            <person name="Madupu R."/>
            <person name="Nelson W.C."/>
            <person name="Dodson R.J."/>
            <person name="Brinkac L.M."/>
            <person name="Daugherty S.C."/>
            <person name="Durkin A.S."/>
            <person name="DeBoy R.T."/>
            <person name="Kolonay J.F."/>
            <person name="Sullivan S.A."/>
            <person name="Zhou L."/>
            <person name="Davidsen T.M."/>
            <person name="Wu M."/>
            <person name="Huston A.L."/>
            <person name="Lewis M."/>
            <person name="Weaver B."/>
            <person name="Weidman J.F."/>
            <person name="Khouri H."/>
            <person name="Utterback T.R."/>
            <person name="Feldblyum T.V."/>
            <person name="Fraser C.M."/>
        </authorList>
    </citation>
    <scope>NUCLEOTIDE SEQUENCE [LARGE SCALE GENOMIC DNA]</scope>
    <source>
        <strain>34H / ATCC BAA-681</strain>
    </source>
</reference>
<organism>
    <name type="scientific">Colwellia psychrerythraea (strain 34H / ATCC BAA-681)</name>
    <name type="common">Vibrio psychroerythus</name>
    <dbReference type="NCBI Taxonomy" id="167879"/>
    <lineage>
        <taxon>Bacteria</taxon>
        <taxon>Pseudomonadati</taxon>
        <taxon>Pseudomonadota</taxon>
        <taxon>Gammaproteobacteria</taxon>
        <taxon>Alteromonadales</taxon>
        <taxon>Colwelliaceae</taxon>
        <taxon>Colwellia</taxon>
    </lineage>
</organism>